<comment type="function">
    <text evidence="1">Binds to actin and affects the structure of the cytoskeleton. At high concentrations, profilin prevents the polymerization of actin, whereas it enhances it at low concentrations (By similarity).</text>
</comment>
<comment type="subunit">
    <text evidence="1">Occurs in many kinds of cells as a complex with monomeric actin in a 1:1 ratio.</text>
</comment>
<comment type="subcellular location">
    <subcellularLocation>
        <location evidence="1">Cytoplasm</location>
        <location evidence="1">Cytoskeleton</location>
    </subcellularLocation>
</comment>
<comment type="PTM">
    <text evidence="1">Phosphorylated by MAP kinases.</text>
</comment>
<comment type="polymorphism">
    <text>Several isoforms of the allergen exist due to polymorphism.</text>
</comment>
<comment type="allergen">
    <text>Causes an allergic reaction in human.</text>
</comment>
<comment type="miscellaneous">
    <text evidence="3">The variability of the residues taking part of IgE-binding epitopes might be responsible of the difference in cross-reactivity among olive pollen cultivars, and between distantly related pollen species, leading to a variable range of allergy reactions among atopic patients.</text>
</comment>
<comment type="similarity">
    <text evidence="2">Belongs to the profilin family.</text>
</comment>
<dbReference type="EMBL" id="DQ117902">
    <property type="protein sequence ID" value="AAZ30392.1"/>
    <property type="molecule type" value="mRNA"/>
</dbReference>
<dbReference type="SMR" id="A4GD50"/>
<dbReference type="Allergome" id="490">
    <property type="allergen name" value="Ole e 2"/>
</dbReference>
<dbReference type="GO" id="GO:0005938">
    <property type="term" value="C:cell cortex"/>
    <property type="evidence" value="ECO:0007669"/>
    <property type="project" value="TreeGrafter"/>
</dbReference>
<dbReference type="GO" id="GO:0005856">
    <property type="term" value="C:cytoskeleton"/>
    <property type="evidence" value="ECO:0007669"/>
    <property type="project" value="UniProtKB-SubCell"/>
</dbReference>
<dbReference type="GO" id="GO:0003785">
    <property type="term" value="F:actin monomer binding"/>
    <property type="evidence" value="ECO:0007669"/>
    <property type="project" value="TreeGrafter"/>
</dbReference>
<dbReference type="CDD" id="cd00148">
    <property type="entry name" value="PROF"/>
    <property type="match status" value="1"/>
</dbReference>
<dbReference type="FunFam" id="3.30.450.30:FF:000001">
    <property type="entry name" value="Profilin"/>
    <property type="match status" value="1"/>
</dbReference>
<dbReference type="Gene3D" id="3.30.450.30">
    <property type="entry name" value="Dynein light chain 2a, cytoplasmic"/>
    <property type="match status" value="1"/>
</dbReference>
<dbReference type="InterPro" id="IPR048278">
    <property type="entry name" value="PFN"/>
</dbReference>
<dbReference type="InterPro" id="IPR005455">
    <property type="entry name" value="PFN_euk"/>
</dbReference>
<dbReference type="InterPro" id="IPR036140">
    <property type="entry name" value="PFN_sf"/>
</dbReference>
<dbReference type="PANTHER" id="PTHR11604">
    <property type="entry name" value="PROFILIN"/>
    <property type="match status" value="1"/>
</dbReference>
<dbReference type="PANTHER" id="PTHR11604:SF25">
    <property type="entry name" value="PROFILIN-5"/>
    <property type="match status" value="1"/>
</dbReference>
<dbReference type="Pfam" id="PF00235">
    <property type="entry name" value="Profilin"/>
    <property type="match status" value="1"/>
</dbReference>
<dbReference type="PRINTS" id="PR00392">
    <property type="entry name" value="PROFILIN"/>
</dbReference>
<dbReference type="PRINTS" id="PR01640">
    <property type="entry name" value="PROFILINPLNT"/>
</dbReference>
<dbReference type="SMART" id="SM00392">
    <property type="entry name" value="PROF"/>
    <property type="match status" value="1"/>
</dbReference>
<dbReference type="SUPFAM" id="SSF55770">
    <property type="entry name" value="Profilin (actin-binding protein)"/>
    <property type="match status" value="1"/>
</dbReference>
<organism>
    <name type="scientific">Olea europaea</name>
    <name type="common">Common olive</name>
    <dbReference type="NCBI Taxonomy" id="4146"/>
    <lineage>
        <taxon>Eukaryota</taxon>
        <taxon>Viridiplantae</taxon>
        <taxon>Streptophyta</taxon>
        <taxon>Embryophyta</taxon>
        <taxon>Tracheophyta</taxon>
        <taxon>Spermatophyta</taxon>
        <taxon>Magnoliopsida</taxon>
        <taxon>eudicotyledons</taxon>
        <taxon>Gunneridae</taxon>
        <taxon>Pentapetalae</taxon>
        <taxon>asterids</taxon>
        <taxon>lamiids</taxon>
        <taxon>Lamiales</taxon>
        <taxon>Oleaceae</taxon>
        <taxon>Oleeae</taxon>
        <taxon>Olea</taxon>
    </lineage>
</organism>
<reference key="1">
    <citation type="journal article" date="2012" name="PLoS ONE">
        <title>Characterization of profilin polymorphism in pollen with a focus on multifunctionality.</title>
        <authorList>
            <person name="Jimenez-Lopez J.C."/>
            <person name="Morales S."/>
            <person name="Castro A.J."/>
            <person name="Volkmann D."/>
            <person name="Rodriguez-Garcia M.I."/>
            <person name="Alche Jde D."/>
        </authorList>
    </citation>
    <scope>NUCLEOTIDE SEQUENCE [MRNA]</scope>
    <scope>POLYMORPHISM</scope>
    <source>
        <strain>cv. Verdial de Huevar</strain>
    </source>
</reference>
<reference key="2">
    <citation type="journal article" date="2013" name="PLoS ONE">
        <title>Analysis of the effects of polymorphism on pollen profilin structural functionality and the generation of conformational, T- and B-cell epitopes.</title>
        <authorList>
            <person name="Jimenez-Lopez J.C."/>
            <person name="Rodriguez-Garcia M.I."/>
            <person name="Alche J.D."/>
        </authorList>
    </citation>
    <scope>3D-STRUCTURE MODELING</scope>
    <scope>DISULFIDE BOND</scope>
</reference>
<feature type="initiator methionine" description="Removed" evidence="1">
    <location>
        <position position="1"/>
    </location>
</feature>
<feature type="chain" id="PRO_0000424985" description="Profilin-2">
    <location>
        <begin position="2"/>
        <end position="134"/>
    </location>
</feature>
<feature type="short sequence motif" description="Involved in PIP2 interaction">
    <location>
        <begin position="84"/>
        <end position="100"/>
    </location>
</feature>
<feature type="modified residue" description="Phosphothreonine" evidence="1">
    <location>
        <position position="114"/>
    </location>
</feature>
<feature type="disulfide bond" evidence="3">
    <location>
        <begin position="13"/>
        <end position="118"/>
    </location>
</feature>
<sequence length="134" mass="14439">MLWQAYVDDHLMCDIEGHEGHRLTAAAIVGHDGSVWAQSATFPQFKPEEMNGVMTDFNEPGHLAPTGLHLGGTKYMVIQGEAGAVIRGKKGSGGITIKKTGQALVFGIYEEPVTPGQCNMVVERLGDYLLEQGL</sequence>
<keyword id="KW-0009">Actin-binding</keyword>
<keyword id="KW-0020">Allergen</keyword>
<keyword id="KW-0963">Cytoplasm</keyword>
<keyword id="KW-0206">Cytoskeleton</keyword>
<keyword id="KW-1015">Disulfide bond</keyword>
<keyword id="KW-0597">Phosphoprotein</keyword>
<protein>
    <recommendedName>
        <fullName>Profilin-2</fullName>
    </recommendedName>
    <alternativeName>
        <fullName>Pollen allergen Ole e 2</fullName>
    </alternativeName>
    <allergenName>Ole e 2</allergenName>
</protein>
<accession>A4GD50</accession>
<name>PROFT_OLEEU</name>
<evidence type="ECO:0000250" key="1"/>
<evidence type="ECO:0000305" key="2"/>
<evidence type="ECO:0000305" key="3">
    <source>
    </source>
</evidence>
<proteinExistence type="evidence at protein level"/>